<organism>
    <name type="scientific">Shigella boydii serotype 18 (strain CDC 3083-94 / BS512)</name>
    <dbReference type="NCBI Taxonomy" id="344609"/>
    <lineage>
        <taxon>Bacteria</taxon>
        <taxon>Pseudomonadati</taxon>
        <taxon>Pseudomonadota</taxon>
        <taxon>Gammaproteobacteria</taxon>
        <taxon>Enterobacterales</taxon>
        <taxon>Enterobacteriaceae</taxon>
        <taxon>Shigella</taxon>
    </lineage>
</organism>
<keyword id="KW-0046">Antibiotic resistance</keyword>
<keyword id="KW-0378">Hydrolase</keyword>
<keyword id="KW-0441">Lipid A biosynthesis</keyword>
<keyword id="KW-0444">Lipid biosynthesis</keyword>
<keyword id="KW-0443">Lipid metabolism</keyword>
<keyword id="KW-0448">Lipopolysaccharide biosynthesis</keyword>
<keyword id="KW-1185">Reference proteome</keyword>
<sequence length="296" mass="33142">MTKVGLRIDVDTFRGTREGVPRLLEILSKHNIQASIFFSVGPDNMGRHLWRLVKPQFLWKMLRSNAASLYGWDILLAGTAWPGKEIGHANADIIREAAKHHEVGLHAWDHHAWQARSGNWDRQTMIDDIARGLRTLEEIIGQPVTCSAAAGWRADQKVIEAKEAFHLRYNSDCRGAMPFRPLLESGNPGTAQIPVTLPTWDEVIGRDVKTEDFNGWLLNRILRDKGTPVYTIHAEVEGCAYQHNFVDLLKRAAQEGVTFCPLSELLSETLPLGQVVRGNIAGREGWLGCQQIAGSR</sequence>
<feature type="chain" id="PRO_0000383542" description="Probable 4-deoxy-4-formamido-L-arabinose-phosphoundecaprenol deformylase ArnD">
    <location>
        <begin position="1"/>
        <end position="296"/>
    </location>
</feature>
<feature type="domain" description="NodB homology" evidence="1">
    <location>
        <begin position="2"/>
        <end position="260"/>
    </location>
</feature>
<reference key="1">
    <citation type="submission" date="2008-05" db="EMBL/GenBank/DDBJ databases">
        <title>Complete sequence of Shigella boydii serotype 18 strain BS512.</title>
        <authorList>
            <person name="Rasko D.A."/>
            <person name="Rosovitz M."/>
            <person name="Maurelli A.T."/>
            <person name="Myers G."/>
            <person name="Seshadri R."/>
            <person name="Cer R."/>
            <person name="Jiang L."/>
            <person name="Ravel J."/>
            <person name="Sebastian Y."/>
        </authorList>
    </citation>
    <scope>NUCLEOTIDE SEQUENCE [LARGE SCALE GENOMIC DNA]</scope>
    <source>
        <strain>CDC 3083-94 / BS512</strain>
    </source>
</reference>
<evidence type="ECO:0000255" key="1">
    <source>
        <dbReference type="HAMAP-Rule" id="MF_01870"/>
    </source>
</evidence>
<protein>
    <recommendedName>
        <fullName evidence="1">Probable 4-deoxy-4-formamido-L-arabinose-phosphoundecaprenol deformylase ArnD</fullName>
        <ecNumber evidence="1">3.5.1.n3</ecNumber>
    </recommendedName>
</protein>
<name>ARND_SHIB3</name>
<comment type="function">
    <text evidence="1">Catalyzes the deformylation of 4-deoxy-4-formamido-L-arabinose-phosphoundecaprenol to 4-amino-4-deoxy-L-arabinose-phosphoundecaprenol. The modified arabinose is attached to lipid A and is required for resistance to polymyxin and cationic antimicrobial peptides.</text>
</comment>
<comment type="catalytic activity">
    <reaction evidence="1">
        <text>4-deoxy-4-formamido-alpha-L-arabinopyranosyl di-trans,octa-cis-undecaprenyl phosphate + H2O = 4-amino-4-deoxy-alpha-L-arabinopyranosyl di-trans,octa-cis-undecaprenyl phosphate + formate</text>
        <dbReference type="Rhea" id="RHEA:27734"/>
        <dbReference type="ChEBI" id="CHEBI:15377"/>
        <dbReference type="ChEBI" id="CHEBI:15740"/>
        <dbReference type="ChEBI" id="CHEBI:58909"/>
        <dbReference type="ChEBI" id="CHEBI:60463"/>
        <dbReference type="EC" id="3.5.1.n3"/>
    </reaction>
</comment>
<comment type="pathway">
    <text evidence="1">Glycolipid biosynthesis; 4-amino-4-deoxy-alpha-L-arabinose undecaprenyl phosphate biosynthesis; 4-amino-4-deoxy-alpha-L-arabinose undecaprenyl phosphate from UDP-4-deoxy-4-formamido-beta-L-arabinose and undecaprenyl phosphate: step 2/2.</text>
</comment>
<comment type="pathway">
    <text evidence="1">Bacterial outer membrane biogenesis; lipopolysaccharide biosynthesis.</text>
</comment>
<comment type="similarity">
    <text evidence="1">Belongs to the polysaccharide deacetylase family. ArnD deformylase subfamily.</text>
</comment>
<dbReference type="EC" id="3.5.1.n3" evidence="1"/>
<dbReference type="EMBL" id="CP001063">
    <property type="protein sequence ID" value="ACD09528.1"/>
    <property type="molecule type" value="Genomic_DNA"/>
</dbReference>
<dbReference type="RefSeq" id="WP_000169731.1">
    <property type="nucleotide sequence ID" value="NC_010658.1"/>
</dbReference>
<dbReference type="SMR" id="B2TW39"/>
<dbReference type="STRING" id="344609.SbBS512_E2632"/>
<dbReference type="KEGG" id="sbc:SbBS512_E2632"/>
<dbReference type="HOGENOM" id="CLU_084199_0_0_6"/>
<dbReference type="UniPathway" id="UPA00030"/>
<dbReference type="UniPathway" id="UPA00036">
    <property type="reaction ID" value="UER00496"/>
</dbReference>
<dbReference type="Proteomes" id="UP000001030">
    <property type="component" value="Chromosome"/>
</dbReference>
<dbReference type="GO" id="GO:0016020">
    <property type="term" value="C:membrane"/>
    <property type="evidence" value="ECO:0007669"/>
    <property type="project" value="GOC"/>
</dbReference>
<dbReference type="GO" id="GO:0016811">
    <property type="term" value="F:hydrolase activity, acting on carbon-nitrogen (but not peptide) bonds, in linear amides"/>
    <property type="evidence" value="ECO:0007669"/>
    <property type="project" value="UniProtKB-UniRule"/>
</dbReference>
<dbReference type="GO" id="GO:0036108">
    <property type="term" value="P:4-amino-4-deoxy-alpha-L-arabinopyranosyl undecaprenyl phosphate biosynthetic process"/>
    <property type="evidence" value="ECO:0007669"/>
    <property type="project" value="UniProtKB-UniRule"/>
</dbReference>
<dbReference type="GO" id="GO:0009245">
    <property type="term" value="P:lipid A biosynthetic process"/>
    <property type="evidence" value="ECO:0007669"/>
    <property type="project" value="UniProtKB-UniRule"/>
</dbReference>
<dbReference type="GO" id="GO:0009103">
    <property type="term" value="P:lipopolysaccharide biosynthetic process"/>
    <property type="evidence" value="ECO:0007669"/>
    <property type="project" value="UniProtKB-UniRule"/>
</dbReference>
<dbReference type="GO" id="GO:0046677">
    <property type="term" value="P:response to antibiotic"/>
    <property type="evidence" value="ECO:0007669"/>
    <property type="project" value="UniProtKB-KW"/>
</dbReference>
<dbReference type="CDD" id="cd10939">
    <property type="entry name" value="CE4_ArnD"/>
    <property type="match status" value="1"/>
</dbReference>
<dbReference type="Gene3D" id="3.20.20.370">
    <property type="entry name" value="Glycoside hydrolase/deacetylase"/>
    <property type="match status" value="1"/>
</dbReference>
<dbReference type="HAMAP" id="MF_01870">
    <property type="entry name" value="ArnD"/>
    <property type="match status" value="1"/>
</dbReference>
<dbReference type="InterPro" id="IPR023557">
    <property type="entry name" value="ArnD"/>
</dbReference>
<dbReference type="InterPro" id="IPR011330">
    <property type="entry name" value="Glyco_hydro/deAcase_b/a-brl"/>
</dbReference>
<dbReference type="InterPro" id="IPR002509">
    <property type="entry name" value="NODB_dom"/>
</dbReference>
<dbReference type="InterPro" id="IPR050248">
    <property type="entry name" value="Polysacc_deacetylase_ArnD"/>
</dbReference>
<dbReference type="NCBIfam" id="NF011923">
    <property type="entry name" value="PRK15394.1"/>
    <property type="match status" value="1"/>
</dbReference>
<dbReference type="PANTHER" id="PTHR10587:SF137">
    <property type="entry name" value="4-DEOXY-4-FORMAMIDO-L-ARABINOSE-PHOSPHOUNDECAPRENOL DEFORMYLASE ARND-RELATED"/>
    <property type="match status" value="1"/>
</dbReference>
<dbReference type="PANTHER" id="PTHR10587">
    <property type="entry name" value="GLYCOSYL TRANSFERASE-RELATED"/>
    <property type="match status" value="1"/>
</dbReference>
<dbReference type="Pfam" id="PF01522">
    <property type="entry name" value="Polysacc_deac_1"/>
    <property type="match status" value="1"/>
</dbReference>
<dbReference type="SUPFAM" id="SSF88713">
    <property type="entry name" value="Glycoside hydrolase/deacetylase"/>
    <property type="match status" value="1"/>
</dbReference>
<dbReference type="PROSITE" id="PS51677">
    <property type="entry name" value="NODB"/>
    <property type="match status" value="1"/>
</dbReference>
<proteinExistence type="inferred from homology"/>
<gene>
    <name evidence="1" type="primary">arnD</name>
    <name type="ordered locus">SbBS512_E2632</name>
</gene>
<accession>B2TW39</accession>